<protein>
    <recommendedName>
        <fullName evidence="18 19">G protein pathway suppressor 2</fullName>
        <shortName evidence="18">GPS-2</shortName>
    </recommendedName>
</protein>
<comment type="function">
    <text evidence="1 5 6 8 12 14 15 16">Key regulator of inflammation, lipid metabolism and mitochondrion homeostasis that acts by inhibiting the activity of the ubiquitin-conjugating enzyme UBE2N/Ubc13, thereby inhibiting 'Lys-63'-linked ubiquitination (By similarity). In the nucleus, can both acts as a corepressor and coactivator of transcription, depending on the context (PubMed:24943844). Acts as a transcription coactivator in adipocytes by promoting the recruitment of PPARG to promoters: acts by inhibiting the activity of the ubiquitin-conjugating enzyme UBE2N/Ubc13, leading to stabilization of KDM4A and subsequent histone H3 'Lys-9' (H3K9) demethylation (By similarity). Promotes cholesterol efflux by acting as a transcription coactivator (PubMed:19481530). Acts as a regulator of B-cell development by inhibiting UBE2N/Ubc13, thereby restricting the activation of Toll-like receptors (TLRs) and B-cell antigen receptors (BCRs) signaling pathways (By similarity). Acts as a key mediator of mitochondrial stress response: in response to mitochondrial depolarization, relocates from the mitochondria to the nucleus following desumoylation and specifically promotes expression of nuclear-encoded mitochondrial genes (PubMed:29499132). Promotes transcription of nuclear-encoded mitochondrial genes by inhibiting UBE2N/Ubc13 (PubMed:29499132). Can also act as a corepressor as part of the N-Cor repressor complex by repressing active PPARG (PubMed:19858209, PubMed:24943844). Plays an anti-inflammatory role in macrophages and is required for insulin sensitivity by acting as a corepressor (By similarity). Plays an anti-inflammatory role during the hepatic acute phase response by interacting with sumoylated NR1H2 and NR5A2 proteins, thereby preventing N-Cor corepressor complex dissociation (PubMed:20159957). In the cytosol, also plays a non-transcriptional role by regulating insulin signaling and pro-inflammatory pathways (By similarity). In the cytoplasm, acts as a negative regulator of inflammation by inhibiting the pro-inflammatory TNF-alpha pathway; acts by repressing UBE2N/Ubc13 activity (By similarity). In the cytoplasm of adipocytes, restricts the activation of insulin signaling via inhibition of UBE2N/Ubc13-mediated ubiquitination of AKT (By similarity). Able to suppress G-protein- and mitogen-activated protein kinase-mediated signal transduction (PubMed:8943324). Acts as a tumor-suppressor in liposarcoma (PubMed:27460081).</text>
</comment>
<comment type="function">
    <text evidence="11">(Microbial infection) Required for efficient replication of hepatitis C virus (HCV) by promoting the interaction between VAPA and HCV virus protein NS5A.</text>
</comment>
<comment type="subunit">
    <text evidence="1 4 5 6 8 9 10 21">Component of the N-Cor repressor complex, at least composed of NCOR1, NCOR2, HDAC3, TBL1X, TBL1R, CORO2A and GPS2 (PubMed:11931768, PubMed:19858209, PubMed:21240272). Interacts (when sumoylated at Lys-71) with TBL1X; leading to protect GPS2 from degradation by the proteasome (PubMed:21240272, PubMed:24943844). Interacts with UBE2N; leading to inhibit UBE2N/Ubc13 activity (By similarity). Interacts with TRAF1 (By similarity). Interacts with TRAF2 (By similarity). Interacts with TRAF6 (By similarity). Interacts with PPARG (when in the liganded conformation) (By similarity). Interacts with (sumoylated) NR1H2; interaction with sumoylated NR1H2 and NR5A2 onto hepatic acute phase protein promoters prevents N-Cor corepressor complex dissociation (PubMed:20159957). Interacts with (sumoylated) NR5A2; interaction with sumoylated NR1H2 and NR5A2 onto hepatic acute phase protein promoters prevents N-Cor corepressor complex dissociation (PubMed:20159957). Interacts with NR1H3 (PubMed:19481530). Interacts with RFX4 (By similarity). Interacts with ANKRD26 (PubMed:22666460).</text>
</comment>
<comment type="subunit">
    <text evidence="11">(Microbial infection) Interacts (via coiled coil domain) with hepatitis C virus (HCV) NS5A.</text>
</comment>
<comment type="interaction">
    <interactant intactId="EBI-713355">
        <id>Q13227</id>
    </interactant>
    <interactant intactId="EBI-11976299">
        <id>Q5BKX5-3</id>
        <label>ACTMAP</label>
    </interactant>
    <organismsDiffer>false</organismsDiffer>
    <experiments>3</experiments>
</comment>
<comment type="interaction">
    <interactant intactId="EBI-713355">
        <id>Q13227</id>
    </interactant>
    <interactant intactId="EBI-357530">
        <id>Q9ULX6</id>
        <label>AKAP8L</label>
    </interactant>
    <organismsDiffer>false</organismsDiffer>
    <experiments>3</experiments>
</comment>
<comment type="interaction">
    <interactant intactId="EBI-713355">
        <id>Q13227</id>
    </interactant>
    <interactant intactId="EBI-492498">
        <id>P18848</id>
        <label>ATF4</label>
    </interactant>
    <organismsDiffer>false</organismsDiffer>
    <experiments>13</experiments>
</comment>
<comment type="interaction">
    <interactant intactId="EBI-713355">
        <id>Q13227</id>
    </interactant>
    <interactant intactId="EBI-492509">
        <id>Q9Y2D1</id>
        <label>ATF5</label>
    </interactant>
    <organismsDiffer>false</organismsDiffer>
    <experiments>3</experiments>
</comment>
<comment type="interaction">
    <interactant intactId="EBI-713355">
        <id>Q13227</id>
    </interactant>
    <interactant intactId="EBI-2949658">
        <id>O95429</id>
        <label>BAG4</label>
    </interactant>
    <organismsDiffer>false</organismsDiffer>
    <experiments>3</experiments>
</comment>
<comment type="interaction">
    <interactant intactId="EBI-713355">
        <id>Q13227</id>
    </interactant>
    <interactant intactId="EBI-3867333">
        <id>A8MQ03</id>
        <label>CYSRT1</label>
    </interactant>
    <organismsDiffer>false</organismsDiffer>
    <experiments>3</experiments>
</comment>
<comment type="interaction">
    <interactant intactId="EBI-713355">
        <id>Q13227</id>
    </interactant>
    <interactant intactId="EBI-724310">
        <id>Q15038</id>
        <label>DAZAP2</label>
    </interactant>
    <organismsDiffer>false</organismsDiffer>
    <experiments>3</experiments>
</comment>
<comment type="interaction">
    <interactant intactId="EBI-713355">
        <id>Q13227</id>
    </interactant>
    <interactant intactId="EBI-12193763">
        <id>A1KXE4-2</id>
        <label>FAM168B</label>
    </interactant>
    <organismsDiffer>false</organismsDiffer>
    <experiments>3</experiments>
</comment>
<comment type="interaction">
    <interactant intactId="EBI-713355">
        <id>Q13227</id>
    </interactant>
    <interactant intactId="EBI-750641">
        <id>Q5TD97</id>
        <label>FHL5</label>
    </interactant>
    <organismsDiffer>false</organismsDiffer>
    <experiments>3</experiments>
</comment>
<comment type="interaction">
    <interactant intactId="EBI-713355">
        <id>Q13227</id>
    </interactant>
    <interactant intactId="EBI-301834">
        <id>Q13547</id>
        <label>HDAC1</label>
    </interactant>
    <organismsDiffer>false</organismsDiffer>
    <experiments>2</experiments>
</comment>
<comment type="interaction">
    <interactant intactId="EBI-713355">
        <id>Q13227</id>
    </interactant>
    <interactant intactId="EBI-607682">
        <id>O15379</id>
        <label>HDAC3</label>
    </interactant>
    <organismsDiffer>false</organismsDiffer>
    <experiments>9</experiments>
</comment>
<comment type="interaction">
    <interactant intactId="EBI-713355">
        <id>Q13227</id>
    </interactant>
    <interactant intactId="EBI-351590">
        <id>P31943</id>
        <label>HNRNPH1</label>
    </interactant>
    <organismsDiffer>false</organismsDiffer>
    <experiments>3</experiments>
</comment>
<comment type="interaction">
    <interactant intactId="EBI-713355">
        <id>Q13227</id>
    </interactant>
    <interactant intactId="EBI-740785">
        <id>P49639</id>
        <label>HOXA1</label>
    </interactant>
    <organismsDiffer>false</organismsDiffer>
    <experiments>3</experiments>
</comment>
<comment type="interaction">
    <interactant intactId="EBI-713355">
        <id>Q13227</id>
    </interactant>
    <interactant intactId="EBI-748258">
        <id>Q5TA45</id>
        <label>INTS11</label>
    </interactant>
    <organismsDiffer>false</organismsDiffer>
    <experiments>3</experiments>
</comment>
<comment type="interaction">
    <interactant intactId="EBI-713355">
        <id>Q13227</id>
    </interactant>
    <interactant intactId="EBI-3044087">
        <id>Q7Z3Y8</id>
        <label>KRT27</label>
    </interactant>
    <organismsDiffer>false</organismsDiffer>
    <experiments>3</experiments>
</comment>
<comment type="interaction">
    <interactant intactId="EBI-713355">
        <id>Q13227</id>
    </interactant>
    <interactant intactId="EBI-948001">
        <id>Q15323</id>
        <label>KRT31</label>
    </interactant>
    <organismsDiffer>false</organismsDiffer>
    <experiments>7</experiments>
</comment>
<comment type="interaction">
    <interactant intactId="EBI-713355">
        <id>Q13227</id>
    </interactant>
    <interactant intactId="EBI-1047093">
        <id>O76011</id>
        <label>KRT34</label>
    </interactant>
    <organismsDiffer>false</organismsDiffer>
    <experiments>3</experiments>
</comment>
<comment type="interaction">
    <interactant intactId="EBI-713355">
        <id>Q13227</id>
    </interactant>
    <interactant intactId="EBI-11958506">
        <id>O76013-2</id>
        <label>KRT36</label>
    </interactant>
    <organismsDiffer>false</organismsDiffer>
    <experiments>3</experiments>
</comment>
<comment type="interaction">
    <interactant intactId="EBI-713355">
        <id>Q13227</id>
    </interactant>
    <interactant intactId="EBI-1052037">
        <id>Q8IUC1</id>
        <label>KRTAP11-1</label>
    </interactant>
    <organismsDiffer>false</organismsDiffer>
    <experiments>3</experiments>
</comment>
<comment type="interaction">
    <interactant intactId="EBI-713355">
        <id>Q13227</id>
    </interactant>
    <interactant intactId="EBI-11953846">
        <id>Q52LG2</id>
        <label>KRTAP13-2</label>
    </interactant>
    <organismsDiffer>false</organismsDiffer>
    <experiments>3</experiments>
</comment>
<comment type="interaction">
    <interactant intactId="EBI-713355">
        <id>Q13227</id>
    </interactant>
    <interactant intactId="EBI-9996449">
        <id>Q9BYR8</id>
        <label>KRTAP3-1</label>
    </interactant>
    <organismsDiffer>false</organismsDiffer>
    <experiments>3</experiments>
</comment>
<comment type="interaction">
    <interactant intactId="EBI-713355">
        <id>Q13227</id>
    </interactant>
    <interactant intactId="EBI-3957694">
        <id>Q9BYR6</id>
        <label>KRTAP3-3</label>
    </interactant>
    <organismsDiffer>false</organismsDiffer>
    <experiments>3</experiments>
</comment>
<comment type="interaction">
    <interactant intactId="EBI-713355">
        <id>Q13227</id>
    </interactant>
    <interactant intactId="EBI-12111050">
        <id>Q3LI64</id>
        <label>KRTAP6-1</label>
    </interactant>
    <organismsDiffer>false</organismsDiffer>
    <experiments>3</experiments>
</comment>
<comment type="interaction">
    <interactant intactId="EBI-713355">
        <id>Q13227</id>
    </interactant>
    <interactant intactId="EBI-11962084">
        <id>Q3LI66</id>
        <label>KRTAP6-2</label>
    </interactant>
    <organismsDiffer>false</organismsDiffer>
    <experiments>5</experiments>
</comment>
<comment type="interaction">
    <interactant intactId="EBI-713355">
        <id>Q13227</id>
    </interactant>
    <interactant intactId="EBI-22311199">
        <id>Q3LI67</id>
        <label>KRTAP6-3</label>
    </interactant>
    <organismsDiffer>false</organismsDiffer>
    <experiments>3</experiments>
</comment>
<comment type="interaction">
    <interactant intactId="EBI-713355">
        <id>Q13227</id>
    </interactant>
    <interactant intactId="EBI-748831">
        <id>P57077</id>
        <label>MAP3K7CL</label>
    </interactant>
    <organismsDiffer>false</organismsDiffer>
    <experiments>2</experiments>
</comment>
<comment type="interaction">
    <interactant intactId="EBI-713355">
        <id>Q13227</id>
    </interactant>
    <interactant intactId="EBI-80830">
        <id>Q9Y618</id>
        <label>NCOR2</label>
    </interactant>
    <organismsDiffer>false</organismsDiffer>
    <experiments>6</experiments>
</comment>
<comment type="interaction">
    <interactant intactId="EBI-713355">
        <id>Q13227</id>
    </interactant>
    <interactant intactId="EBI-10249760">
        <id>Q9UHB4</id>
        <label>NDOR1</label>
    </interactant>
    <organismsDiffer>false</organismsDiffer>
    <experiments>5</experiments>
</comment>
<comment type="interaction">
    <interactant intactId="EBI-713355">
        <id>Q13227</id>
    </interactant>
    <interactant intactId="EBI-536879">
        <id>O43482</id>
        <label>OIP5</label>
    </interactant>
    <organismsDiffer>false</organismsDiffer>
    <experiments>5</experiments>
</comment>
<comment type="interaction">
    <interactant intactId="EBI-713355">
        <id>Q13227</id>
    </interactant>
    <interactant intactId="EBI-943588">
        <id>Q16633</id>
        <label>POU2AF1</label>
    </interactant>
    <organismsDiffer>false</organismsDiffer>
    <experiments>3</experiments>
</comment>
<comment type="interaction">
    <interactant intactId="EBI-713355">
        <id>Q13227</id>
    </interactant>
    <interactant intactId="EBI-749285">
        <id>Q15311</id>
        <label>RALBP1</label>
    </interactant>
    <organismsDiffer>false</organismsDiffer>
    <experiments>14</experiments>
</comment>
<comment type="interaction">
    <interactant intactId="EBI-713355">
        <id>Q13227</id>
    </interactant>
    <interactant intactId="EBI-740322">
        <id>Q93062</id>
        <label>RBPMS</label>
    </interactant>
    <organismsDiffer>false</organismsDiffer>
    <experiments>3</experiments>
</comment>
<comment type="interaction">
    <interactant intactId="EBI-713355">
        <id>Q13227</id>
    </interactant>
    <interactant intactId="EBI-6117072">
        <id>Q86VW0</id>
        <label>SESTD1</label>
    </interactant>
    <organismsDiffer>false</organismsDiffer>
    <experiments>7</experiments>
</comment>
<comment type="interaction">
    <interactant intactId="EBI-713355">
        <id>Q13227</id>
    </interactant>
    <interactant intactId="EBI-12275818">
        <id>Q53HV7-2</id>
        <label>SMUG1</label>
    </interactant>
    <organismsDiffer>false</organismsDiffer>
    <experiments>3</experiments>
</comment>
<comment type="interaction">
    <interactant intactId="EBI-713355">
        <id>Q13227</id>
    </interactant>
    <interactant intactId="EBI-15904933">
        <id>O60907-2</id>
        <label>TBL1X</label>
    </interactant>
    <organismsDiffer>false</organismsDiffer>
    <experiments>6</experiments>
</comment>
<comment type="interaction">
    <interactant intactId="EBI-713355">
        <id>Q13227</id>
    </interactant>
    <interactant intactId="EBI-1105213">
        <id>Q9UBB9</id>
        <label>TFIP11</label>
    </interactant>
    <organismsDiffer>false</organismsDiffer>
    <experiments>6</experiments>
</comment>
<comment type="interaction">
    <interactant intactId="EBI-713355">
        <id>Q13227</id>
    </interactant>
    <interactant intactId="EBI-11952721">
        <id>Q05BL1</id>
        <label>TP53BP2</label>
    </interactant>
    <organismsDiffer>false</organismsDiffer>
    <experiments>3</experiments>
</comment>
<comment type="interaction">
    <interactant intactId="EBI-713355">
        <id>Q13227</id>
    </interactant>
    <interactant intactId="EBI-742327">
        <id>Q15654</id>
        <label>TRIP6</label>
    </interactant>
    <organismsDiffer>false</organismsDiffer>
    <experiments>3</experiments>
</comment>
<comment type="interaction">
    <interactant intactId="EBI-713355">
        <id>Q13227</id>
    </interactant>
    <interactant intactId="EBI-12867288">
        <id>Q8WUN7</id>
        <label>UBTD2</label>
    </interactant>
    <organismsDiffer>false</organismsDiffer>
    <experiments>3</experiments>
</comment>
<comment type="interaction">
    <interactant intactId="EBI-713355">
        <id>Q13227</id>
    </interactant>
    <interactant intactId="EBI-2559305">
        <id>A5D8V6</id>
        <label>VPS37C</label>
    </interactant>
    <organismsDiffer>false</organismsDiffer>
    <experiments>3</experiments>
</comment>
<comment type="interaction">
    <interactant intactId="EBI-713355">
        <id>Q13227</id>
    </interactant>
    <interactant intactId="EBI-779991">
        <id>P12504</id>
        <label>vif</label>
    </interactant>
    <organismsDiffer>true</organismsDiffer>
    <experiments>2</experiments>
</comment>
<comment type="interaction">
    <interactant intactId="EBI-713355">
        <id>Q13227</id>
    </interactant>
    <interactant intactId="EBI-6863748">
        <id>PRO_0000037551</id>
        <dbReference type="UniProtKB" id="Q9WMX2"/>
    </interactant>
    <organismsDiffer>true</organismsDiffer>
    <experiments>2</experiments>
</comment>
<comment type="subcellular location">
    <subcellularLocation>
        <location evidence="6 12 15">Nucleus</location>
    </subcellularLocation>
    <subcellularLocation>
        <location evidence="15">Mitochondrion</location>
    </subcellularLocation>
    <subcellularLocation>
        <location evidence="11 12 15">Cytoplasm</location>
        <location evidence="11 12 15">Cytosol</location>
    </subcellularLocation>
    <text evidence="1 12">Sumoylation regulates the subcellular location (PubMed:24943844). Relocates from the mitochondria to the nucleus following desumoylation, leading to mediate mitochondrial stress response (By similarity).</text>
</comment>
<comment type="alternative products">
    <event type="alternative splicing"/>
    <isoform>
        <id>Q13227-1</id>
        <name>1</name>
        <sequence type="displayed"/>
    </isoform>
    <isoform>
        <id>Q13227-2</id>
        <name>2</name>
        <sequence type="described" ref="VSP_057012"/>
    </isoform>
</comment>
<comment type="tissue specificity">
    <text evidence="16">Widely expressed.</text>
</comment>
<comment type="induction">
    <text evidence="13 14">Down-regulated in liposarcoma (PubMed:27460081). Down-regulated in macrophages of patients with adipose tissue inflammation and type-2 diabetes (PubMed:27270589).</text>
</comment>
<comment type="PTM">
    <text evidence="1 12">Sumoylation regulates its subcellular location (PubMed:24943844). Sumoylation at Lys-45 and Lys-71 regulates the shuttling between the cytoplasm and the nucleus (PubMed:24943844). Sumoylation at Lys-71 is required for interaction with TBL1X (By similarity). Sumoylated at Lys-45 and Lys-71 in mitochondrion (By similarity). Desumoylation by SENP1 leads to relocation from the mitochondria to the nucleus (By similarity).</text>
</comment>
<comment type="PTM">
    <text evidence="1">Ubiquitinated at the C-terminus by SIAH2; leading to its degradation by the proteasome. Interaction with TBL1X and methylation at Arg-323 protect GPS2 against ubiquitination and degradation.</text>
</comment>
<comment type="PTM">
    <text evidence="1">Methylated at Arg-312 and Arg-323 by PRMT6. Methylation at Arg-323 protects from degradation by the proteasome.</text>
</comment>
<comment type="sequence caution" evidence="20">
    <conflict type="erroneous translation">
        <sequence resource="EMBL-CDS" id="CAB75677"/>
    </conflict>
    <text>Wrong choice of frame.</text>
</comment>
<name>GPS2_HUMAN</name>
<evidence type="ECO:0000250" key="1">
    <source>
        <dbReference type="UniProtKB" id="Q921N8"/>
    </source>
</evidence>
<evidence type="ECO:0000255" key="2"/>
<evidence type="ECO:0000256" key="3">
    <source>
        <dbReference type="SAM" id="MobiDB-lite"/>
    </source>
</evidence>
<evidence type="ECO:0000269" key="4">
    <source>
    </source>
</evidence>
<evidence type="ECO:0000269" key="5">
    <source>
    </source>
</evidence>
<evidence type="ECO:0000269" key="6">
    <source>
    </source>
</evidence>
<evidence type="ECO:0000269" key="7">
    <source>
    </source>
</evidence>
<evidence type="ECO:0000269" key="8">
    <source>
    </source>
</evidence>
<evidence type="ECO:0000269" key="9">
    <source>
    </source>
</evidence>
<evidence type="ECO:0000269" key="10">
    <source>
    </source>
</evidence>
<evidence type="ECO:0000269" key="11">
    <source>
    </source>
</evidence>
<evidence type="ECO:0000269" key="12">
    <source>
    </source>
</evidence>
<evidence type="ECO:0000269" key="13">
    <source>
    </source>
</evidence>
<evidence type="ECO:0000269" key="14">
    <source>
    </source>
</evidence>
<evidence type="ECO:0000269" key="15">
    <source>
    </source>
</evidence>
<evidence type="ECO:0000269" key="16">
    <source>
    </source>
</evidence>
<evidence type="ECO:0000303" key="17">
    <source>
    </source>
</evidence>
<evidence type="ECO:0000303" key="18">
    <source>
    </source>
</evidence>
<evidence type="ECO:0000303" key="19">
    <source>
    </source>
</evidence>
<evidence type="ECO:0000305" key="20"/>
<evidence type="ECO:0000305" key="21">
    <source>
    </source>
</evidence>
<evidence type="ECO:0000312" key="22">
    <source>
        <dbReference type="HGNC" id="HGNC:4550"/>
    </source>
</evidence>
<evidence type="ECO:0007744" key="23">
    <source>
        <dbReference type="PDB" id="2L5G"/>
    </source>
</evidence>
<evidence type="ECO:0007744" key="24">
    <source>
    </source>
</evidence>
<evidence type="ECO:0007829" key="25">
    <source>
        <dbReference type="PDB" id="2L5G"/>
    </source>
</evidence>
<keyword id="KW-0002">3D-structure</keyword>
<keyword id="KW-0010">Activator</keyword>
<keyword id="KW-0025">Alternative splicing</keyword>
<keyword id="KW-0175">Coiled coil</keyword>
<keyword id="KW-0963">Cytoplasm</keyword>
<keyword id="KW-0945">Host-virus interaction</keyword>
<keyword id="KW-1017">Isopeptide bond</keyword>
<keyword id="KW-0488">Methylation</keyword>
<keyword id="KW-0496">Mitochondrion</keyword>
<keyword id="KW-0539">Nucleus</keyword>
<keyword id="KW-1267">Proteomics identification</keyword>
<keyword id="KW-1185">Reference proteome</keyword>
<keyword id="KW-0678">Repressor</keyword>
<keyword id="KW-0804">Transcription</keyword>
<keyword id="KW-0805">Transcription regulation</keyword>
<keyword id="KW-0043">Tumor suppressor</keyword>
<keyword id="KW-0832">Ubl conjugation</keyword>
<gene>
    <name evidence="22" type="primary">GPS2</name>
</gene>
<dbReference type="EMBL" id="U28963">
    <property type="protein sequence ID" value="AAB60432.1"/>
    <property type="molecule type" value="mRNA"/>
</dbReference>
<dbReference type="EMBL" id="BT006998">
    <property type="protein sequence ID" value="AAP35644.1"/>
    <property type="molecule type" value="mRNA"/>
</dbReference>
<dbReference type="EMBL" id="AK301877">
    <property type="protein sequence ID" value="BAG63313.1"/>
    <property type="molecule type" value="mRNA"/>
</dbReference>
<dbReference type="EMBL" id="CR541723">
    <property type="protein sequence ID" value="CAG46524.1"/>
    <property type="molecule type" value="mRNA"/>
</dbReference>
<dbReference type="EMBL" id="CR541750">
    <property type="protein sequence ID" value="CAG46550.1"/>
    <property type="molecule type" value="mRNA"/>
</dbReference>
<dbReference type="EMBL" id="AL122080">
    <property type="protein sequence ID" value="CAB59255.1"/>
    <property type="molecule type" value="mRNA"/>
</dbReference>
<dbReference type="EMBL" id="AL157493">
    <property type="protein sequence ID" value="CAB75677.2"/>
    <property type="status" value="ALT_SEQ"/>
    <property type="molecule type" value="mRNA"/>
</dbReference>
<dbReference type="EMBL" id="AC026954">
    <property type="status" value="NOT_ANNOTATED_CDS"/>
    <property type="molecule type" value="Genomic_DNA"/>
</dbReference>
<dbReference type="EMBL" id="BC013652">
    <property type="protein sequence ID" value="AAH13652.1"/>
    <property type="molecule type" value="mRNA"/>
</dbReference>
<dbReference type="EMBL" id="BC103901">
    <property type="protein sequence ID" value="AAI03902.1"/>
    <property type="molecule type" value="mRNA"/>
</dbReference>
<dbReference type="EMBL" id="BC103903">
    <property type="protein sequence ID" value="AAI03904.1"/>
    <property type="molecule type" value="mRNA"/>
</dbReference>
<dbReference type="EMBL" id="BC107738">
    <property type="protein sequence ID" value="AAI07739.1"/>
    <property type="molecule type" value="mRNA"/>
</dbReference>
<dbReference type="CCDS" id="CCDS11100.1">
    <molecule id="Q13227-1"/>
</dbReference>
<dbReference type="PIR" id="T34562">
    <property type="entry name" value="T34562"/>
</dbReference>
<dbReference type="RefSeq" id="NP_004480.1">
    <molecule id="Q13227-1"/>
    <property type="nucleotide sequence ID" value="NM_004489.5"/>
</dbReference>
<dbReference type="PDB" id="2L5G">
    <property type="method" value="NMR"/>
    <property type="chains" value="A=53-90"/>
</dbReference>
<dbReference type="PDBsum" id="2L5G"/>
<dbReference type="BMRB" id="Q13227"/>
<dbReference type="SMR" id="Q13227"/>
<dbReference type="BioGRID" id="109132">
    <property type="interactions" value="151"/>
</dbReference>
<dbReference type="CORUM" id="Q13227"/>
<dbReference type="DIP" id="DIP-34427N"/>
<dbReference type="FunCoup" id="Q13227">
    <property type="interactions" value="1748"/>
</dbReference>
<dbReference type="IntAct" id="Q13227">
    <property type="interactions" value="130"/>
</dbReference>
<dbReference type="MINT" id="Q13227"/>
<dbReference type="STRING" id="9606.ENSP00000379841"/>
<dbReference type="GlyCosmos" id="Q13227">
    <property type="glycosylation" value="1 site, 1 glycan"/>
</dbReference>
<dbReference type="GlyGen" id="Q13227">
    <property type="glycosylation" value="1 site, 1 O-linked glycan (1 site)"/>
</dbReference>
<dbReference type="iPTMnet" id="Q13227"/>
<dbReference type="PhosphoSitePlus" id="Q13227"/>
<dbReference type="BioMuta" id="GPS2"/>
<dbReference type="DMDM" id="6226623"/>
<dbReference type="jPOST" id="Q13227"/>
<dbReference type="MassIVE" id="Q13227"/>
<dbReference type="PaxDb" id="9606-ENSP00000370104"/>
<dbReference type="PeptideAtlas" id="Q13227"/>
<dbReference type="ProteomicsDB" id="5420"/>
<dbReference type="ProteomicsDB" id="59233">
    <molecule id="Q13227-1"/>
</dbReference>
<dbReference type="Pumba" id="Q13227"/>
<dbReference type="Antibodypedia" id="11906">
    <property type="antibodies" value="219 antibodies from 26 providers"/>
</dbReference>
<dbReference type="DNASU" id="2874"/>
<dbReference type="Ensembl" id="ENST00000380728.7">
    <molecule id="Q13227-1"/>
    <property type="protein sequence ID" value="ENSP00000370104.2"/>
    <property type="gene ID" value="ENSG00000132522.16"/>
</dbReference>
<dbReference type="Ensembl" id="ENST00000389167.9">
    <molecule id="Q13227-1"/>
    <property type="protein sequence ID" value="ENSP00000379841.4"/>
    <property type="gene ID" value="ENSG00000132522.16"/>
</dbReference>
<dbReference type="Ensembl" id="ENST00000672046.1">
    <molecule id="Q13227-1"/>
    <property type="protein sequence ID" value="ENSP00000500677.1"/>
    <property type="gene ID" value="ENSG00000288325.1"/>
</dbReference>
<dbReference type="Ensembl" id="ENST00000673265.1">
    <molecule id="Q13227-1"/>
    <property type="protein sequence ID" value="ENSP00000500255.1"/>
    <property type="gene ID" value="ENSG00000288325.1"/>
</dbReference>
<dbReference type="GeneID" id="2874"/>
<dbReference type="KEGG" id="hsa:2874"/>
<dbReference type="MANE-Select" id="ENST00000380728.7">
    <property type="protein sequence ID" value="ENSP00000370104.2"/>
    <property type="RefSeq nucleotide sequence ID" value="NM_004489.5"/>
    <property type="RefSeq protein sequence ID" value="NP_004480.1"/>
</dbReference>
<dbReference type="UCSC" id="uc002gfx.2">
    <molecule id="Q13227-1"/>
    <property type="organism name" value="human"/>
</dbReference>
<dbReference type="AGR" id="HGNC:4550"/>
<dbReference type="CTD" id="2874"/>
<dbReference type="DisGeNET" id="2874"/>
<dbReference type="GeneCards" id="GPS2"/>
<dbReference type="HGNC" id="HGNC:4550">
    <property type="gene designation" value="GPS2"/>
</dbReference>
<dbReference type="HPA" id="ENSG00000132522">
    <property type="expression patterns" value="Low tissue specificity"/>
</dbReference>
<dbReference type="MIM" id="601935">
    <property type="type" value="gene"/>
</dbReference>
<dbReference type="neXtProt" id="NX_Q13227"/>
<dbReference type="OpenTargets" id="ENSG00000132522"/>
<dbReference type="PharmGKB" id="PA28945"/>
<dbReference type="VEuPathDB" id="HostDB:ENSG00000132522"/>
<dbReference type="eggNOG" id="ENOG502RFJB">
    <property type="taxonomic scope" value="Eukaryota"/>
</dbReference>
<dbReference type="GeneTree" id="ENSGT00390000004049"/>
<dbReference type="InParanoid" id="Q13227"/>
<dbReference type="OMA" id="QIEHANQ"/>
<dbReference type="OrthoDB" id="10038194at2759"/>
<dbReference type="PAN-GO" id="Q13227">
    <property type="GO annotations" value="3 GO annotations based on evolutionary models"/>
</dbReference>
<dbReference type="PhylomeDB" id="Q13227"/>
<dbReference type="TreeFam" id="TF329067"/>
<dbReference type="PathwayCommons" id="Q13227"/>
<dbReference type="Reactome" id="R-HSA-1989781">
    <property type="pathway name" value="PPARA activates gene expression"/>
</dbReference>
<dbReference type="Reactome" id="R-HSA-3214815">
    <property type="pathway name" value="HDACs deacetylate histones"/>
</dbReference>
<dbReference type="Reactome" id="R-HSA-9022537">
    <property type="pathway name" value="Loss of MECP2 binding ability to the NCoR/SMRT complex"/>
</dbReference>
<dbReference type="Reactome" id="R-HSA-9022692">
    <property type="pathway name" value="Regulation of MECP2 expression and activity"/>
</dbReference>
<dbReference type="Reactome" id="R-HSA-9029569">
    <property type="pathway name" value="NR1H3 &amp; NR1H2 regulate gene expression linked to cholesterol transport and efflux"/>
</dbReference>
<dbReference type="Reactome" id="R-HSA-9609690">
    <property type="pathway name" value="HCMV Early Events"/>
</dbReference>
<dbReference type="Reactome" id="R-HSA-9841922">
    <property type="pathway name" value="MLL4 and MLL3 complexes regulate expression of PPARG target genes in adipogenesis and hepatic steatosis"/>
</dbReference>
<dbReference type="SignaLink" id="Q13227"/>
<dbReference type="BioGRID-ORCS" id="2874">
    <property type="hits" value="45 hits in 1170 CRISPR screens"/>
</dbReference>
<dbReference type="ChiTaRS" id="GPS2">
    <property type="organism name" value="human"/>
</dbReference>
<dbReference type="EvolutionaryTrace" id="Q13227"/>
<dbReference type="GeneWiki" id="GPS2_(gene)"/>
<dbReference type="GenomeRNAi" id="2874"/>
<dbReference type="Pharos" id="Q13227">
    <property type="development level" value="Tbio"/>
</dbReference>
<dbReference type="PRO" id="PR:Q13227"/>
<dbReference type="Proteomes" id="UP000005640">
    <property type="component" value="Chromosome 17"/>
</dbReference>
<dbReference type="RNAct" id="Q13227">
    <property type="molecule type" value="protein"/>
</dbReference>
<dbReference type="Bgee" id="ENSG00000132522">
    <property type="expression patterns" value="Expressed in left testis and 96 other cell types or tissues"/>
</dbReference>
<dbReference type="ExpressionAtlas" id="Q13227">
    <property type="expression patterns" value="baseline and differential"/>
</dbReference>
<dbReference type="GO" id="GO:0005829">
    <property type="term" value="C:cytosol"/>
    <property type="evidence" value="ECO:0000314"/>
    <property type="project" value="UniProtKB"/>
</dbReference>
<dbReference type="GO" id="GO:0005739">
    <property type="term" value="C:mitochondrion"/>
    <property type="evidence" value="ECO:0000314"/>
    <property type="project" value="UniProtKB"/>
</dbReference>
<dbReference type="GO" id="GO:0005654">
    <property type="term" value="C:nucleoplasm"/>
    <property type="evidence" value="ECO:0000304"/>
    <property type="project" value="Reactome"/>
</dbReference>
<dbReference type="GO" id="GO:0005634">
    <property type="term" value="C:nucleus"/>
    <property type="evidence" value="ECO:0000314"/>
    <property type="project" value="UniProtKB"/>
</dbReference>
<dbReference type="GO" id="GO:0005667">
    <property type="term" value="C:transcription regulator complex"/>
    <property type="evidence" value="ECO:0000318"/>
    <property type="project" value="GO_Central"/>
</dbReference>
<dbReference type="GO" id="GO:0017053">
    <property type="term" value="C:transcription repressor complex"/>
    <property type="evidence" value="ECO:0000314"/>
    <property type="project" value="UniProtKB"/>
</dbReference>
<dbReference type="GO" id="GO:0030332">
    <property type="term" value="F:cyclin binding"/>
    <property type="evidence" value="ECO:0000353"/>
    <property type="project" value="UniProtKB"/>
</dbReference>
<dbReference type="GO" id="GO:0005095">
    <property type="term" value="F:GTPase inhibitor activity"/>
    <property type="evidence" value="ECO:0000304"/>
    <property type="project" value="ProtInc"/>
</dbReference>
<dbReference type="GO" id="GO:0003713">
    <property type="term" value="F:transcription coactivator activity"/>
    <property type="evidence" value="ECO:0000314"/>
    <property type="project" value="UniProtKB"/>
</dbReference>
<dbReference type="GO" id="GO:0003712">
    <property type="term" value="F:transcription coregulator activity"/>
    <property type="evidence" value="ECO:0000318"/>
    <property type="project" value="GO_Central"/>
</dbReference>
<dbReference type="GO" id="GO:0003714">
    <property type="term" value="F:transcription corepressor activity"/>
    <property type="evidence" value="ECO:0000314"/>
    <property type="project" value="UniProtKB"/>
</dbReference>
<dbReference type="GO" id="GO:0030183">
    <property type="term" value="P:B cell differentiation"/>
    <property type="evidence" value="ECO:0000250"/>
    <property type="project" value="UniProtKB"/>
</dbReference>
<dbReference type="GO" id="GO:0007254">
    <property type="term" value="P:JNK cascade"/>
    <property type="evidence" value="ECO:0000304"/>
    <property type="project" value="ProtInc"/>
</dbReference>
<dbReference type="GO" id="GO:0050859">
    <property type="term" value="P:negative regulation of B cell receptor signaling pathway"/>
    <property type="evidence" value="ECO:0000250"/>
    <property type="project" value="UniProtKB"/>
</dbReference>
<dbReference type="GO" id="GO:0045599">
    <property type="term" value="P:negative regulation of fat cell differentiation"/>
    <property type="evidence" value="ECO:0000250"/>
    <property type="project" value="UniProtKB"/>
</dbReference>
<dbReference type="GO" id="GO:0050728">
    <property type="term" value="P:negative regulation of inflammatory response"/>
    <property type="evidence" value="ECO:0000250"/>
    <property type="project" value="UniProtKB"/>
</dbReference>
<dbReference type="GO" id="GO:0046329">
    <property type="term" value="P:negative regulation of JNK cascade"/>
    <property type="evidence" value="ECO:0000314"/>
    <property type="project" value="UniProtKB"/>
</dbReference>
<dbReference type="GO" id="GO:1900045">
    <property type="term" value="P:negative regulation of protein K63-linked ubiquitination"/>
    <property type="evidence" value="ECO:0000250"/>
    <property type="project" value="UniProtKB"/>
</dbReference>
<dbReference type="GO" id="GO:0034122">
    <property type="term" value="P:negative regulation of toll-like receptor signaling pathway"/>
    <property type="evidence" value="ECO:0000250"/>
    <property type="project" value="UniProtKB"/>
</dbReference>
<dbReference type="GO" id="GO:0000122">
    <property type="term" value="P:negative regulation of transcription by RNA polymerase II"/>
    <property type="evidence" value="ECO:0000314"/>
    <property type="project" value="UniProtKB"/>
</dbReference>
<dbReference type="GO" id="GO:0010804">
    <property type="term" value="P:negative regulation of tumor necrosis factor-mediated signaling pathway"/>
    <property type="evidence" value="ECO:0000250"/>
    <property type="project" value="UniProtKB"/>
</dbReference>
<dbReference type="GO" id="GO:0010875">
    <property type="term" value="P:positive regulation of cholesterol efflux"/>
    <property type="evidence" value="ECO:0000314"/>
    <property type="project" value="UniProtKB"/>
</dbReference>
<dbReference type="GO" id="GO:0035360">
    <property type="term" value="P:positive regulation of peroxisome proliferator activated receptor signaling pathway"/>
    <property type="evidence" value="ECO:0000250"/>
    <property type="project" value="UniProtKB"/>
</dbReference>
<dbReference type="GO" id="GO:0045944">
    <property type="term" value="P:positive regulation of transcription by RNA polymerase II"/>
    <property type="evidence" value="ECO:0000314"/>
    <property type="project" value="UniProtKB"/>
</dbReference>
<dbReference type="GO" id="GO:0045598">
    <property type="term" value="P:regulation of fat cell differentiation"/>
    <property type="evidence" value="ECO:0000250"/>
    <property type="project" value="UniProtKB"/>
</dbReference>
<dbReference type="GO" id="GO:0019216">
    <property type="term" value="P:regulation of lipid metabolic process"/>
    <property type="evidence" value="ECO:0000250"/>
    <property type="project" value="UniProtKB"/>
</dbReference>
<dbReference type="GO" id="GO:0006357">
    <property type="term" value="P:regulation of transcription by RNA polymerase II"/>
    <property type="evidence" value="ECO:0000318"/>
    <property type="project" value="GO_Central"/>
</dbReference>
<dbReference type="GO" id="GO:0098780">
    <property type="term" value="P:response to mitochondrial depolarisation"/>
    <property type="evidence" value="ECO:0000250"/>
    <property type="project" value="UniProtKB"/>
</dbReference>
<dbReference type="IDEAL" id="IID00320"/>
<dbReference type="InterPro" id="IPR026094">
    <property type="entry name" value="GPS2"/>
</dbReference>
<dbReference type="PANTHER" id="PTHR22654">
    <property type="entry name" value="G PROTEIN PATHWAY SUPPRESSOR 2"/>
    <property type="match status" value="1"/>
</dbReference>
<dbReference type="PANTHER" id="PTHR22654:SF2">
    <property type="entry name" value="G PROTEIN PATHWAY SUPPRESSOR 2"/>
    <property type="match status" value="1"/>
</dbReference>
<dbReference type="Pfam" id="PF15991">
    <property type="entry name" value="G_path_suppress"/>
    <property type="match status" value="1"/>
</dbReference>
<organism>
    <name type="scientific">Homo sapiens</name>
    <name type="common">Human</name>
    <dbReference type="NCBI Taxonomy" id="9606"/>
    <lineage>
        <taxon>Eukaryota</taxon>
        <taxon>Metazoa</taxon>
        <taxon>Chordata</taxon>
        <taxon>Craniata</taxon>
        <taxon>Vertebrata</taxon>
        <taxon>Euteleostomi</taxon>
        <taxon>Mammalia</taxon>
        <taxon>Eutheria</taxon>
        <taxon>Euarchontoglires</taxon>
        <taxon>Primates</taxon>
        <taxon>Haplorrhini</taxon>
        <taxon>Catarrhini</taxon>
        <taxon>Hominidae</taxon>
        <taxon>Homo</taxon>
    </lineage>
</organism>
<accession>Q13227</accession>
<accession>B4DXA1</accession>
<accession>Q6FHM8</accession>
<sequence>MPALLERPKLSNAMARALHRHIMMERERKRQEEEEVDKMMEQKMKEEQERRKKKEMEERMSLEETKEQILKLEEKLLALQEEKHQLFLQLKKVLHEEEKRRRKEQSDLTTLTSAAYQQSLTVHTGTHLLSMQGSPGGHNRPGTLMAADRAKQMFGPQVLTTRHYVGSAAAFAGTPEHGQFQGSPGGAYGTAQPPPHYGPTQPAYSPSQQLRAPSAFPAVQYLSQPQPQPYAVHGHFQPTQTGFLQPGGALSLQKQMEHANQQTGFSDSSSLRPMHPQALHPAPGLLASPQLPVQMQPAGKSGFAATSQPGPRLPFIQHSQNPRFYHK</sequence>
<reference key="1">
    <citation type="journal article" date="1996" name="Mol. Cell. Biol.">
        <title>Two human cDNAs, including a homolog of Arabidopsis FUS6 (COP11), suppress G-protein- and mitogen-activated protein kinase-mediated signal transduction in yeast and mammalian cells.</title>
        <authorList>
            <person name="Spain B.H."/>
            <person name="Bowdish K.S."/>
            <person name="Pacal A."/>
            <person name="Flueckiger Staub S."/>
            <person name="Koo D."/>
            <person name="Chang K.-Y.R."/>
            <person name="Xie W."/>
            <person name="Colicelli J."/>
        </authorList>
    </citation>
    <scope>NUCLEOTIDE SEQUENCE [MRNA] (ISOFORM 1)</scope>
    <scope>TISSUE SPECIFICITY</scope>
    <scope>FUNCTION</scope>
</reference>
<reference key="2">
    <citation type="submission" date="2003-05" db="EMBL/GenBank/DDBJ databases">
        <title>Cloning of human full-length CDSs in BD Creator(TM) system donor vector.</title>
        <authorList>
            <person name="Kalnine N."/>
            <person name="Chen X."/>
            <person name="Rolfs A."/>
            <person name="Halleck A."/>
            <person name="Hines L."/>
            <person name="Eisenstein S."/>
            <person name="Koundinya M."/>
            <person name="Raphael J."/>
            <person name="Moreira D."/>
            <person name="Kelley T."/>
            <person name="LaBaer J."/>
            <person name="Lin Y."/>
            <person name="Phelan M."/>
            <person name="Farmer A."/>
        </authorList>
    </citation>
    <scope>NUCLEOTIDE SEQUENCE [LARGE SCALE MRNA] (ISOFORM 1)</scope>
</reference>
<reference key="3">
    <citation type="journal article" date="2004" name="Nat. Genet.">
        <title>Complete sequencing and characterization of 21,243 full-length human cDNAs.</title>
        <authorList>
            <person name="Ota T."/>
            <person name="Suzuki Y."/>
            <person name="Nishikawa T."/>
            <person name="Otsuki T."/>
            <person name="Sugiyama T."/>
            <person name="Irie R."/>
            <person name="Wakamatsu A."/>
            <person name="Hayashi K."/>
            <person name="Sato H."/>
            <person name="Nagai K."/>
            <person name="Kimura K."/>
            <person name="Makita H."/>
            <person name="Sekine M."/>
            <person name="Obayashi M."/>
            <person name="Nishi T."/>
            <person name="Shibahara T."/>
            <person name="Tanaka T."/>
            <person name="Ishii S."/>
            <person name="Yamamoto J."/>
            <person name="Saito K."/>
            <person name="Kawai Y."/>
            <person name="Isono Y."/>
            <person name="Nakamura Y."/>
            <person name="Nagahari K."/>
            <person name="Murakami K."/>
            <person name="Yasuda T."/>
            <person name="Iwayanagi T."/>
            <person name="Wagatsuma M."/>
            <person name="Shiratori A."/>
            <person name="Sudo H."/>
            <person name="Hosoiri T."/>
            <person name="Kaku Y."/>
            <person name="Kodaira H."/>
            <person name="Kondo H."/>
            <person name="Sugawara M."/>
            <person name="Takahashi M."/>
            <person name="Kanda K."/>
            <person name="Yokoi T."/>
            <person name="Furuya T."/>
            <person name="Kikkawa E."/>
            <person name="Omura Y."/>
            <person name="Abe K."/>
            <person name="Kamihara K."/>
            <person name="Katsuta N."/>
            <person name="Sato K."/>
            <person name="Tanikawa M."/>
            <person name="Yamazaki M."/>
            <person name="Ninomiya K."/>
            <person name="Ishibashi T."/>
            <person name="Yamashita H."/>
            <person name="Murakawa K."/>
            <person name="Fujimori K."/>
            <person name="Tanai H."/>
            <person name="Kimata M."/>
            <person name="Watanabe M."/>
            <person name="Hiraoka S."/>
            <person name="Chiba Y."/>
            <person name="Ishida S."/>
            <person name="Ono Y."/>
            <person name="Takiguchi S."/>
            <person name="Watanabe S."/>
            <person name="Yosida M."/>
            <person name="Hotuta T."/>
            <person name="Kusano J."/>
            <person name="Kanehori K."/>
            <person name="Takahashi-Fujii A."/>
            <person name="Hara H."/>
            <person name="Tanase T.-O."/>
            <person name="Nomura Y."/>
            <person name="Togiya S."/>
            <person name="Komai F."/>
            <person name="Hara R."/>
            <person name="Takeuchi K."/>
            <person name="Arita M."/>
            <person name="Imose N."/>
            <person name="Musashino K."/>
            <person name="Yuuki H."/>
            <person name="Oshima A."/>
            <person name="Sasaki N."/>
            <person name="Aotsuka S."/>
            <person name="Yoshikawa Y."/>
            <person name="Matsunawa H."/>
            <person name="Ichihara T."/>
            <person name="Shiohata N."/>
            <person name="Sano S."/>
            <person name="Moriya S."/>
            <person name="Momiyama H."/>
            <person name="Satoh N."/>
            <person name="Takami S."/>
            <person name="Terashima Y."/>
            <person name="Suzuki O."/>
            <person name="Nakagawa S."/>
            <person name="Senoh A."/>
            <person name="Mizoguchi H."/>
            <person name="Goto Y."/>
            <person name="Shimizu F."/>
            <person name="Wakebe H."/>
            <person name="Hishigaki H."/>
            <person name="Watanabe T."/>
            <person name="Sugiyama A."/>
            <person name="Takemoto M."/>
            <person name="Kawakami B."/>
            <person name="Yamazaki M."/>
            <person name="Watanabe K."/>
            <person name="Kumagai A."/>
            <person name="Itakura S."/>
            <person name="Fukuzumi Y."/>
            <person name="Fujimori Y."/>
            <person name="Komiyama M."/>
            <person name="Tashiro H."/>
            <person name="Tanigami A."/>
            <person name="Fujiwara T."/>
            <person name="Ono T."/>
            <person name="Yamada K."/>
            <person name="Fujii Y."/>
            <person name="Ozaki K."/>
            <person name="Hirao M."/>
            <person name="Ohmori Y."/>
            <person name="Kawabata A."/>
            <person name="Hikiji T."/>
            <person name="Kobatake N."/>
            <person name="Inagaki H."/>
            <person name="Ikema Y."/>
            <person name="Okamoto S."/>
            <person name="Okitani R."/>
            <person name="Kawakami T."/>
            <person name="Noguchi S."/>
            <person name="Itoh T."/>
            <person name="Shigeta K."/>
            <person name="Senba T."/>
            <person name="Matsumura K."/>
            <person name="Nakajima Y."/>
            <person name="Mizuno T."/>
            <person name="Morinaga M."/>
            <person name="Sasaki M."/>
            <person name="Togashi T."/>
            <person name="Oyama M."/>
            <person name="Hata H."/>
            <person name="Watanabe M."/>
            <person name="Komatsu T."/>
            <person name="Mizushima-Sugano J."/>
            <person name="Satoh T."/>
            <person name="Shirai Y."/>
            <person name="Takahashi Y."/>
            <person name="Nakagawa K."/>
            <person name="Okumura K."/>
            <person name="Nagase T."/>
            <person name="Nomura N."/>
            <person name="Kikuchi H."/>
            <person name="Masuho Y."/>
            <person name="Yamashita R."/>
            <person name="Nakai K."/>
            <person name="Yada T."/>
            <person name="Nakamura Y."/>
            <person name="Ohara O."/>
            <person name="Isogai T."/>
            <person name="Sugano S."/>
        </authorList>
    </citation>
    <scope>NUCLEOTIDE SEQUENCE [LARGE SCALE MRNA] (ISOFORM 2)</scope>
    <source>
        <tissue>Testis</tissue>
    </source>
</reference>
<reference key="4">
    <citation type="submission" date="2004-06" db="EMBL/GenBank/DDBJ databases">
        <title>Cloning of human full open reading frames in Gateway(TM) system entry vector (pDONR201).</title>
        <authorList>
            <person name="Ebert L."/>
            <person name="Schick M."/>
            <person name="Neubert P."/>
            <person name="Schatten R."/>
            <person name="Henze S."/>
            <person name="Korn B."/>
        </authorList>
    </citation>
    <scope>NUCLEOTIDE SEQUENCE [LARGE SCALE MRNA] (ISOFORM 1)</scope>
</reference>
<reference key="5">
    <citation type="journal article" date="2007" name="BMC Genomics">
        <title>The full-ORF clone resource of the German cDNA consortium.</title>
        <authorList>
            <person name="Bechtel S."/>
            <person name="Rosenfelder H."/>
            <person name="Duda A."/>
            <person name="Schmidt C.P."/>
            <person name="Ernst U."/>
            <person name="Wellenreuther R."/>
            <person name="Mehrle A."/>
            <person name="Schuster C."/>
            <person name="Bahr A."/>
            <person name="Bloecker H."/>
            <person name="Heubner D."/>
            <person name="Hoerlein A."/>
            <person name="Michel G."/>
            <person name="Wedler H."/>
            <person name="Koehrer K."/>
            <person name="Ottenwaelder B."/>
            <person name="Poustka A."/>
            <person name="Wiemann S."/>
            <person name="Schupp I."/>
        </authorList>
    </citation>
    <scope>NUCLEOTIDE SEQUENCE [LARGE SCALE MRNA] (ISOFORM 1)</scope>
    <source>
        <tissue>Testis</tissue>
    </source>
</reference>
<reference key="6">
    <citation type="journal article" date="2006" name="Nature">
        <title>DNA sequence of human chromosome 17 and analysis of rearrangement in the human lineage.</title>
        <authorList>
            <person name="Zody M.C."/>
            <person name="Garber M."/>
            <person name="Adams D.J."/>
            <person name="Sharpe T."/>
            <person name="Harrow J."/>
            <person name="Lupski J.R."/>
            <person name="Nicholson C."/>
            <person name="Searle S.M."/>
            <person name="Wilming L."/>
            <person name="Young S.K."/>
            <person name="Abouelleil A."/>
            <person name="Allen N.R."/>
            <person name="Bi W."/>
            <person name="Bloom T."/>
            <person name="Borowsky M.L."/>
            <person name="Bugalter B.E."/>
            <person name="Butler J."/>
            <person name="Chang J.L."/>
            <person name="Chen C.-K."/>
            <person name="Cook A."/>
            <person name="Corum B."/>
            <person name="Cuomo C.A."/>
            <person name="de Jong P.J."/>
            <person name="DeCaprio D."/>
            <person name="Dewar K."/>
            <person name="FitzGerald M."/>
            <person name="Gilbert J."/>
            <person name="Gibson R."/>
            <person name="Gnerre S."/>
            <person name="Goldstein S."/>
            <person name="Grafham D.V."/>
            <person name="Grocock R."/>
            <person name="Hafez N."/>
            <person name="Hagopian D.S."/>
            <person name="Hart E."/>
            <person name="Norman C.H."/>
            <person name="Humphray S."/>
            <person name="Jaffe D.B."/>
            <person name="Jones M."/>
            <person name="Kamal M."/>
            <person name="Khodiyar V.K."/>
            <person name="LaButti K."/>
            <person name="Laird G."/>
            <person name="Lehoczky J."/>
            <person name="Liu X."/>
            <person name="Lokyitsang T."/>
            <person name="Loveland J."/>
            <person name="Lui A."/>
            <person name="Macdonald P."/>
            <person name="Major J.E."/>
            <person name="Matthews L."/>
            <person name="Mauceli E."/>
            <person name="McCarroll S.A."/>
            <person name="Mihalev A.H."/>
            <person name="Mudge J."/>
            <person name="Nguyen C."/>
            <person name="Nicol R."/>
            <person name="O'Leary S.B."/>
            <person name="Osoegawa K."/>
            <person name="Schwartz D.C."/>
            <person name="Shaw-Smith C."/>
            <person name="Stankiewicz P."/>
            <person name="Steward C."/>
            <person name="Swarbreck D."/>
            <person name="Venkataraman V."/>
            <person name="Whittaker C.A."/>
            <person name="Yang X."/>
            <person name="Zimmer A.R."/>
            <person name="Bradley A."/>
            <person name="Hubbard T."/>
            <person name="Birren B.W."/>
            <person name="Rogers J."/>
            <person name="Lander E.S."/>
            <person name="Nusbaum C."/>
        </authorList>
    </citation>
    <scope>NUCLEOTIDE SEQUENCE [LARGE SCALE GENOMIC DNA]</scope>
</reference>
<reference key="7">
    <citation type="journal article" date="2004" name="Genome Res.">
        <title>The status, quality, and expansion of the NIH full-length cDNA project: the Mammalian Gene Collection (MGC).</title>
        <authorList>
            <consortium name="The MGC Project Team"/>
        </authorList>
    </citation>
    <scope>NUCLEOTIDE SEQUENCE [LARGE SCALE MRNA] (ISOFORM 1)</scope>
    <source>
        <tissue>Cervix</tissue>
    </source>
</reference>
<reference key="8">
    <citation type="journal article" date="2002" name="Mol. Cell">
        <title>The N-CoR-HDAC3 nuclear receptor corepressor complex inhibits the JNK pathway through the integral subunit GPS2.</title>
        <authorList>
            <person name="Zhang J."/>
            <person name="Kalkum M."/>
            <person name="Chait B.T."/>
            <person name="Roeder R.G."/>
        </authorList>
    </citation>
    <scope>IDENTIFICATION BY MASS SPECTROMETRY</scope>
    <scope>IDENTIFICATION IN THE N-COR COMPLEX WITH NCOR1; NCOR2; TBL1X; TBL1R AND HDAC3</scope>
</reference>
<reference key="9">
    <citation type="journal article" date="2009" name="J. Biol. Chem.">
        <title>G protein pathway suppressor 2 (GPS2) is a transcriptional corepressor important for estrogen receptor alpha-mediated transcriptional regulation.</title>
        <authorList>
            <person name="Cheng X."/>
            <person name="Kao H.Y."/>
        </authorList>
    </citation>
    <scope>FUNCTION</scope>
    <scope>SUBCELLULAR LOCATION</scope>
    <scope>IDENTIFICATION IN THE N-COR COMPLEX</scope>
</reference>
<reference key="10">
    <citation type="journal article" date="2009" name="Mol. Cell">
        <title>GPS2 is required for cholesterol efflux by triggering histone demethylation, LXR recruitment, and coregulator assembly at the ABCG1 locus.</title>
        <authorList>
            <person name="Jakobsson T."/>
            <person name="Venteclef N."/>
            <person name="Toresson G."/>
            <person name="Damdimopoulos A.E."/>
            <person name="Ehrlund A."/>
            <person name="Lou X."/>
            <person name="Sanyal S."/>
            <person name="Steffensen K.R."/>
            <person name="Gustafsson J.A."/>
            <person name="Treuter E."/>
        </authorList>
    </citation>
    <scope>FUNCTION</scope>
    <scope>INTERACTION WITH NR1H3</scope>
</reference>
<reference key="11">
    <citation type="journal article" date="2010" name="FASEB J.">
        <title>Differential arginine methylation of the G-protein pathway suppressor GPS-2 recognized by tumor-specific T cells in melanoma.</title>
        <authorList>
            <person name="Jarmalavicius S."/>
            <person name="Trefzer U."/>
            <person name="Walden P."/>
        </authorList>
    </citation>
    <scope>METHYLATION AT ARG-323</scope>
    <scope>MUTAGENESIS OF SER-319; GLN-320; ASN-321; PRO-322; PHE-324; TYR-325 AND LYS-327</scope>
</reference>
<reference key="12">
    <citation type="journal article" date="2010" name="Genes Dev.">
        <title>GPS2-dependent corepressor/SUMO pathways govern anti-inflammatory actions of LRH-1 and LXRbeta in the hepatic acute phase response.</title>
        <authorList>
            <person name="Venteclef N."/>
            <person name="Jakobsson T."/>
            <person name="Ehrlund A."/>
            <person name="Damdimopoulos A."/>
            <person name="Mikkonen L."/>
            <person name="Ellis E."/>
            <person name="Nilsson L.M."/>
            <person name="Parini P."/>
            <person name="Jaenne O.A."/>
            <person name="Gustafsson J.A."/>
            <person name="Steffensen K.R."/>
            <person name="Treuter E."/>
        </authorList>
    </citation>
    <scope>FUNCTION</scope>
    <scope>INTERACTION WITH NR5A2 AND NR1H2</scope>
    <scope>MUTAGENESIS OF 61-SER--LEU-94; 69-ILE-LEU-70; 76-LEU--LEU-79 AND 86-LEU--LEU-90</scope>
</reference>
<reference key="13">
    <citation type="journal article" date="2012" name="PLoS ONE">
        <title>ANKRD26 and its interacting partners TRIO, GPS2, HMMR and DIPA regulate adipogenesis in 3T3-L1 cells.</title>
        <authorList>
            <person name="Liu X.F."/>
            <person name="Bera T.K."/>
            <person name="Kahue C."/>
            <person name="Escobar T."/>
            <person name="Fei Z."/>
            <person name="Raciti G.A."/>
            <person name="Pastan I."/>
        </authorList>
    </citation>
    <scope>INTERACTION WITH ANKRD26</scope>
</reference>
<reference key="14">
    <citation type="journal article" date="2013" name="PLoS ONE">
        <title>GPS2 is required for the association of NS5A with VAP-A and hepatitis C virus replication.</title>
        <authorList>
            <person name="Xu G."/>
            <person name="Xin X."/>
            <person name="Zheng C."/>
        </authorList>
    </citation>
    <scope>FUNCTION (MICROBIAL INFECTION)</scope>
    <scope>INTERACTION WITH HCV NS5A (MICROBIAL INFECTION)</scope>
    <scope>SUBCELLULAR LOCATION</scope>
</reference>
<reference key="15">
    <citation type="journal article" date="2014" name="Mol. Biol. Cell">
        <title>SUMOylation of GPS2 protein regulates its transcription-suppressing function.</title>
        <authorList>
            <person name="Bi H."/>
            <person name="Li S."/>
            <person name="Wang M."/>
            <person name="Jia Z."/>
            <person name="Chang A.K."/>
            <person name="Pang P."/>
            <person name="Wu H."/>
        </authorList>
    </citation>
    <scope>FUNCTION</scope>
    <scope>SUBCELLULAR LOCATION</scope>
    <scope>INTERACTION WITH TBL1X</scope>
    <scope>SUMOYLATION AT LYS-45 AND LYS-71</scope>
    <scope>MUTAGENESIS OF LYS-45 AND LYS-71</scope>
</reference>
<reference key="16">
    <citation type="journal article" date="2014" name="Mol. Cell. Proteomics">
        <title>Immunoaffinity enrichment and mass spectrometry analysis of protein methylation.</title>
        <authorList>
            <person name="Guo A."/>
            <person name="Gu H."/>
            <person name="Zhou J."/>
            <person name="Mulhern D."/>
            <person name="Wang Y."/>
            <person name="Lee K.A."/>
            <person name="Yang V."/>
            <person name="Aguiar M."/>
            <person name="Kornhauser J."/>
            <person name="Jia X."/>
            <person name="Ren J."/>
            <person name="Beausoleil S.A."/>
            <person name="Silva J.C."/>
            <person name="Vemulapalli V."/>
            <person name="Bedford M.T."/>
            <person name="Comb M.J."/>
        </authorList>
    </citation>
    <scope>METHYLATION [LARGE SCALE ANALYSIS] AT ARG-312 AND ARG-323</scope>
    <scope>IDENTIFICATION BY MASS SPECTROMETRY [LARGE SCALE ANALYSIS]</scope>
    <source>
        <tissue>Colon carcinoma</tissue>
    </source>
</reference>
<reference key="17">
    <citation type="journal article" date="2016" name="Nat. Med.">
        <title>Loss of the co-repressor GPS2 sensitizes macrophage activation upon metabolic stress induced by obesity and type 2 diabetes.</title>
        <authorList>
            <person name="Fan R."/>
            <person name="Toubal A."/>
            <person name="Goni S."/>
            <person name="Drareni K."/>
            <person name="Huang Z."/>
            <person name="Alzaid F."/>
            <person name="Ballaire R."/>
            <person name="Ancel P."/>
            <person name="Liang N."/>
            <person name="Damdimopoulos A."/>
            <person name="Hainault I."/>
            <person name="Soprani A."/>
            <person name="Aron-Wisnewsky J."/>
            <person name="Foufelle F."/>
            <person name="Lawrence T."/>
            <person name="Gautier J.F."/>
            <person name="Venteclef N."/>
            <person name="Treuter E."/>
        </authorList>
    </citation>
    <scope>INDUCTION</scope>
</reference>
<reference key="18">
    <citation type="journal article" date="2016" name="Tumor Biol.">
        <title>G protein pathway suppressor 2 (GPS2) acts as a tumor suppressor in liposarcoma.</title>
        <authorList>
            <person name="Huang X.D."/>
            <person name="Xiao F.J."/>
            <person name="Wang S.X."/>
            <person name="Yin R.H."/>
            <person name="Lu C.R."/>
            <person name="Li Q.F."/>
            <person name="Liu N."/>
            <person name="Zhang Y."/>
            <person name="Wang L.S."/>
            <person name="Li P.Y."/>
        </authorList>
    </citation>
    <scope>FUNCTION</scope>
    <scope>INDUCTION</scope>
</reference>
<reference key="19">
    <citation type="journal article" date="2018" name="Mol. Cell">
        <title>Mitochondrial retrograde signaling in mammals is mediated by the transcriptional cofactor GPS2 via direct mitochondria-to-nucleus translocation.</title>
        <authorList>
            <person name="Cardamone M.D."/>
            <person name="Tanasa B."/>
            <person name="Cederquist C.T."/>
            <person name="Huang J."/>
            <person name="Mahdaviani K."/>
            <person name="Li W."/>
            <person name="Rosenfeld M.G."/>
            <person name="Liesa M."/>
            <person name="Perissi V."/>
        </authorList>
    </citation>
    <scope>FUNCTION</scope>
    <scope>SUBCELLULAR LOCATION</scope>
</reference>
<reference evidence="23" key="20">
    <citation type="journal article" date="2011" name="Nat. Struct. Mol. Biol.">
        <title>Structural basis for the assembly of the SMRT/NCoR core transcriptional repression machinery.</title>
        <authorList>
            <person name="Oberoi J."/>
            <person name="Fairall L."/>
            <person name="Watson P.J."/>
            <person name="Yang J.C."/>
            <person name="Czimmerer Z."/>
            <person name="Kampmann T."/>
            <person name="Goult B.T."/>
            <person name="Greenwood J.A."/>
            <person name="Gooch J.T."/>
            <person name="Kallenberger B.C."/>
            <person name="Nagy L."/>
            <person name="Neuhaus D."/>
            <person name="Schwabe J.W."/>
        </authorList>
    </citation>
    <scope>STRUCTURE BY NMR OF 53-90</scope>
    <scope>IDENTIFICATION IN THE N-COR COMPLEX</scope>
    <scope>INTERACTION WITH TBL1X</scope>
    <scope>MUTAGENESIS OF 19-HIS--ILE-22</scope>
</reference>
<feature type="chain" id="PRO_0000087565" description="G protein pathway suppressor 2">
    <location>
        <begin position="1"/>
        <end position="327"/>
    </location>
</feature>
<feature type="region of interest" description="Disordered" evidence="3">
    <location>
        <begin position="26"/>
        <end position="65"/>
    </location>
</feature>
<feature type="region of interest" description="interaction with SUMO" evidence="8">
    <location>
        <begin position="61"/>
        <end position="94"/>
    </location>
</feature>
<feature type="region of interest" description="Disordered" evidence="3">
    <location>
        <begin position="177"/>
        <end position="208"/>
    </location>
</feature>
<feature type="region of interest" description="Disordered" evidence="3">
    <location>
        <begin position="253"/>
        <end position="327"/>
    </location>
</feature>
<feature type="coiled-coil region" evidence="2">
    <location>
        <begin position="14"/>
        <end position="109"/>
    </location>
</feature>
<feature type="compositionally biased region" description="Polar residues" evidence="3">
    <location>
        <begin position="253"/>
        <end position="271"/>
    </location>
</feature>
<feature type="compositionally biased region" description="Polar residues" evidence="3">
    <location>
        <begin position="317"/>
        <end position="327"/>
    </location>
</feature>
<feature type="modified residue" description="Asymmetric dimethylarginine" evidence="24">
    <location>
        <position position="312"/>
    </location>
</feature>
<feature type="modified residue" description="Asymmetric dimethylarginine; alternate" evidence="7 24">
    <location>
        <position position="323"/>
    </location>
</feature>
<feature type="modified residue" description="Omega-N-methylarginine; alternate" evidence="7">
    <location>
        <position position="323"/>
    </location>
</feature>
<feature type="cross-link" description="Glycyl lysine isopeptide (Lys-Gly) (interchain with G-Cter in SUMO1)" evidence="12">
    <location>
        <position position="45"/>
    </location>
</feature>
<feature type="cross-link" description="Glycyl lysine isopeptide (Lys-Gly) (interchain with G-Cter in SUMO1)" evidence="12">
    <location>
        <position position="71"/>
    </location>
</feature>
<feature type="splice variant" id="VSP_057012" description="In isoform 2." evidence="17">
    <original>SGFAATSQPGPRLPFIQHSQNPRFYHK</original>
    <variation>TAP</variation>
    <location>
        <begin position="301"/>
        <end position="327"/>
    </location>
</feature>
<feature type="sequence variant" id="VAR_021972" description="In dbSNP:rs2292065.">
    <original>T</original>
    <variation>A</variation>
    <location>
        <position position="306"/>
    </location>
</feature>
<feature type="mutagenesis site" description="Abolishes interaction with TBL1X." evidence="9">
    <original>HRHI</original>
    <variation>AEHA</variation>
    <location>
        <begin position="19"/>
        <end position="22"/>
    </location>
</feature>
<feature type="mutagenesis site" description="Abolishes sumoylation; when associated with R-71." evidence="12">
    <original>K</original>
    <variation>R</variation>
    <location>
        <position position="45"/>
    </location>
</feature>
<feature type="mutagenesis site" description="Abolishes interaction with sumoylated NR1H2 and NR5A2 proteins." evidence="8">
    <location>
        <begin position="61"/>
        <end position="94"/>
    </location>
</feature>
<feature type="mutagenesis site" description="Weakly affects interaction with sumoylated NR1H2 and NR5A2 proteins." evidence="8">
    <original>IL</original>
    <variation>AA</variation>
    <location>
        <begin position="69"/>
        <end position="70"/>
    </location>
</feature>
<feature type="mutagenesis site" description="Abolishes sumoylation; when associated with R-45." evidence="12">
    <original>K</original>
    <variation>R</variation>
    <location>
        <position position="71"/>
    </location>
</feature>
<feature type="mutagenesis site" description="Weakly affects interaction with sumoylated NR1H2 and NR5A2 proteins." evidence="8">
    <original>LLAL</original>
    <variation>RRAR</variation>
    <location>
        <begin position="76"/>
        <end position="79"/>
    </location>
</feature>
<feature type="mutagenesis site" description="Weakly affects interaction with sumoylated NR1H2 and NR5A2 proteins." evidence="8">
    <original>LFLQL</original>
    <variation>RFRQR</variation>
    <location>
        <begin position="86"/>
        <end position="90"/>
    </location>
</feature>
<feature type="mutagenesis site" description="Does not affect methylation." evidence="7">
    <original>S</original>
    <variation>A</variation>
    <location>
        <position position="319"/>
    </location>
</feature>
<feature type="mutagenesis site" description="Does not affect methylation." evidence="7">
    <original>Q</original>
    <variation>A</variation>
    <location>
        <position position="320"/>
    </location>
</feature>
<feature type="mutagenesis site" description="Strongly decreases methylation." evidence="7">
    <original>N</original>
    <variation>A</variation>
    <location>
        <position position="321"/>
    </location>
</feature>
<feature type="mutagenesis site" description="Strongly decreases methylation." evidence="7">
    <original>P</original>
    <variation>A</variation>
    <location>
        <position position="322"/>
    </location>
</feature>
<feature type="mutagenesis site" description="Abolishes methylation." evidence="7">
    <original>F</original>
    <variation>A</variation>
    <location>
        <position position="324"/>
    </location>
</feature>
<feature type="mutagenesis site" description="Abolishes methylation." evidence="7">
    <original>Y</original>
    <variation>A</variation>
    <location>
        <position position="325"/>
    </location>
</feature>
<feature type="mutagenesis site" description="Decreases methylation." evidence="7">
    <original>K</original>
    <variation>A</variation>
    <location>
        <position position="327"/>
    </location>
</feature>
<feature type="helix" evidence="25">
    <location>
        <begin position="57"/>
        <end position="89"/>
    </location>
</feature>
<proteinExistence type="evidence at protein level"/>